<reference key="1">
    <citation type="submission" date="2004-08" db="EMBL/GenBank/DDBJ databases">
        <authorList>
            <consortium name="NIH - Xenopus Gene Collection (XGC) project"/>
        </authorList>
    </citation>
    <scope>NUCLEOTIDE SEQUENCE [LARGE SCALE MRNA]</scope>
    <source>
        <tissue>Kidney</tissue>
    </source>
</reference>
<reference key="2">
    <citation type="journal article" date="2000" name="J. Biol. Chem.">
        <title>Cloning and functional characterization of a cation-Cl-cotransporter-interacting protein.</title>
        <authorList>
            <person name="Caron L."/>
            <person name="Rousseau F."/>
            <person name="Gagnon E."/>
            <person name="Isenring P."/>
        </authorList>
    </citation>
    <scope>FUNCTION</scope>
    <scope>SUBCELLULAR LOCATION</scope>
</reference>
<feature type="chain" id="PRO_0000331419" description="Solute carrier family 12 member 9">
    <location>
        <begin position="1"/>
        <end position="899"/>
    </location>
</feature>
<feature type="topological domain" description="Cytoplasmic" evidence="2">
    <location>
        <begin position="1"/>
        <end position="44"/>
    </location>
</feature>
<feature type="transmembrane region" description="Helical" evidence="2">
    <location>
        <begin position="45"/>
        <end position="65"/>
    </location>
</feature>
<feature type="topological domain" description="Extracellular" evidence="2">
    <location>
        <begin position="66"/>
        <end position="80"/>
    </location>
</feature>
<feature type="transmembrane region" description="Helical" evidence="2">
    <location>
        <begin position="81"/>
        <end position="101"/>
    </location>
</feature>
<feature type="topological domain" description="Cytoplasmic" evidence="2">
    <location>
        <begin position="102"/>
        <end position="127"/>
    </location>
</feature>
<feature type="transmembrane region" description="Helical" evidence="2">
    <location>
        <begin position="128"/>
        <end position="148"/>
    </location>
</feature>
<feature type="topological domain" description="Extracellular" evidence="2">
    <location>
        <begin position="149"/>
        <end position="176"/>
    </location>
</feature>
<feature type="transmembrane region" description="Helical" evidence="2">
    <location>
        <begin position="177"/>
        <end position="197"/>
    </location>
</feature>
<feature type="topological domain" description="Cytoplasmic" evidence="2">
    <location>
        <begin position="198"/>
        <end position="202"/>
    </location>
</feature>
<feature type="transmembrane region" description="Helical" evidence="2">
    <location>
        <begin position="203"/>
        <end position="223"/>
    </location>
</feature>
<feature type="topological domain" description="Extracellular" evidence="2">
    <location>
        <begin position="224"/>
        <end position="266"/>
    </location>
</feature>
<feature type="transmembrane region" description="Helical" evidence="2">
    <location>
        <begin position="267"/>
        <end position="287"/>
    </location>
</feature>
<feature type="topological domain" description="Cytoplasmic" evidence="2">
    <location>
        <begin position="288"/>
        <end position="304"/>
    </location>
</feature>
<feature type="transmembrane region" description="Helical" evidence="2">
    <location>
        <begin position="305"/>
        <end position="325"/>
    </location>
</feature>
<feature type="topological domain" description="Extracellular" evidence="2">
    <location>
        <begin position="326"/>
        <end position="347"/>
    </location>
</feature>
<feature type="transmembrane region" description="Helical" evidence="2">
    <location>
        <begin position="348"/>
        <end position="368"/>
    </location>
</feature>
<feature type="topological domain" description="Cytoplasmic" evidence="2">
    <location>
        <begin position="369"/>
        <end position="393"/>
    </location>
</feature>
<feature type="transmembrane region" description="Helical" evidence="2">
    <location>
        <begin position="394"/>
        <end position="414"/>
    </location>
</feature>
<feature type="topological domain" description="Extracellular" evidence="2">
    <location>
        <begin position="415"/>
        <end position="419"/>
    </location>
</feature>
<feature type="transmembrane region" description="Helical" evidence="2">
    <location>
        <begin position="420"/>
        <end position="440"/>
    </location>
</feature>
<feature type="topological domain" description="Cytoplasmic" evidence="2">
    <location>
        <begin position="441"/>
        <end position="469"/>
    </location>
</feature>
<feature type="transmembrane region" description="Helical" evidence="2">
    <location>
        <begin position="470"/>
        <end position="490"/>
    </location>
</feature>
<feature type="topological domain" description="Extracellular" evidence="2">
    <location>
        <begin position="491"/>
        <end position="739"/>
    </location>
</feature>
<feature type="transmembrane region" description="Helical" evidence="2">
    <location>
        <begin position="740"/>
        <end position="760"/>
    </location>
</feature>
<feature type="topological domain" description="Cytoplasmic" evidence="2">
    <location>
        <begin position="761"/>
        <end position="899"/>
    </location>
</feature>
<feature type="glycosylation site" description="N-linked (GlcNAc...) asparagine" evidence="2">
    <location>
        <position position="235"/>
    </location>
</feature>
<feature type="glycosylation site" description="N-linked (GlcNAc...) asparagine" evidence="2">
    <location>
        <position position="246"/>
    </location>
</feature>
<keyword id="KW-1003">Cell membrane</keyword>
<keyword id="KW-0325">Glycoprotein</keyword>
<keyword id="KW-0458">Lysosome</keyword>
<keyword id="KW-0472">Membrane</keyword>
<keyword id="KW-1185">Reference proteome</keyword>
<keyword id="KW-0812">Transmembrane</keyword>
<keyword id="KW-1133">Transmembrane helix</keyword>
<keyword id="KW-0813">Transport</keyword>
<sequence>MTSESSPLLHYRLFSVSDGGLGPPDSSPIMTDAVTVGTGPTQRKLSTFFGVVVPTVLSMFSIVVFMRIGFVVGHAGLLQSLLMLFVAYVIIWLTVLSVCAISTNGAVQGGGAYFMISRTLGPEFGGSIGLMFYLANVFACGVYVLGLVEAVLDVFGRDPSDVTDSLRSLPQGYGYSFLYASIILLLCMAICLVGASIYSQASFFIFLLVFVVLLTILISFLAVRPLTVSIRHGGNVTMTGVYTGINSSTLHNNLQADYSLDYTTGNLMNFATVFAVMFNGCTGIMAGCNLSGELKQPSRSIPMGTIIAVIITFFVYLILFIFTAFTCDRTLLREDYGFFRSINIWPPFVLIGVYATSLSASMSTLIGASRILHALAKDDLFGVLLAPAKLVSKGGNPWGAVVYTWALVQLVLLAGKLNTIAGIVTVFYLIAYAAIDLACLALEWASAPNFRPTFRFFSWHTCLLGILSSLVMMFLINPAYASGSIVLLLLLLGSIHFRSSSSSWGYISQALIFHQVRKYLLLLDVRKDHVKFWRPQILLMVSNPRTSSQLIRFVNDLKKGGLYILGHVETGDLDTLPSDPVQTHYSFWLSLVDKLNVKAFVDLTLCPSVRQGTQHLLRITGLGGMKPNTVVLGFYDDACPDDYFLQDSLFTPGLSPKDDAFGVDATSLQAHFPPARDPETPRLLSAKDYVSMICDALKMHKNIVLARNFPLLVRPEASSSSPATYIDVWPLDLLRPQASAYVDVCSLFLLQMACILNMAASWRRYQLRVFLCVESRGGSDGASGWLAAEAKFRELLSKLRIRALIRVVAWDRVAAFRVQNMGGQVLNREPISSEYLNAAKSAVTDEGGTETAVRFLYLPRPPADSSLHERYLEELDTLTSGLGPTLLIHGLTPVTCTEL</sequence>
<dbReference type="EMBL" id="BC080420">
    <property type="protein sequence ID" value="AAH80420.1"/>
    <property type="molecule type" value="mRNA"/>
</dbReference>
<dbReference type="RefSeq" id="NP_001090251.1">
    <property type="nucleotide sequence ID" value="NM_001096782.1"/>
</dbReference>
<dbReference type="SMR" id="Q0VGW6"/>
<dbReference type="GlyCosmos" id="Q0VGW6">
    <property type="glycosylation" value="2 sites, No reported glycans"/>
</dbReference>
<dbReference type="DNASU" id="779157"/>
<dbReference type="GeneID" id="779157"/>
<dbReference type="KEGG" id="xla:779157"/>
<dbReference type="AGR" id="Xenbase:XB-GENE-5943252"/>
<dbReference type="CTD" id="779157"/>
<dbReference type="Xenbase" id="XB-GENE-5943252">
    <property type="gene designation" value="slc12a9.L"/>
</dbReference>
<dbReference type="OMA" id="NIKYWRP"/>
<dbReference type="OrthoDB" id="2020542at2759"/>
<dbReference type="Proteomes" id="UP000186698">
    <property type="component" value="Chromosome 3L"/>
</dbReference>
<dbReference type="Bgee" id="779157">
    <property type="expression patterns" value="Expressed in egg cell and 19 other cell types or tissues"/>
</dbReference>
<dbReference type="GO" id="GO:0005765">
    <property type="term" value="C:lysosomal membrane"/>
    <property type="evidence" value="ECO:0007669"/>
    <property type="project" value="UniProtKB-SubCell"/>
</dbReference>
<dbReference type="GO" id="GO:0005886">
    <property type="term" value="C:plasma membrane"/>
    <property type="evidence" value="ECO:0007669"/>
    <property type="project" value="UniProtKB-SubCell"/>
</dbReference>
<dbReference type="GO" id="GO:0015379">
    <property type="term" value="F:potassium:chloride symporter activity"/>
    <property type="evidence" value="ECO:0000318"/>
    <property type="project" value="GO_Central"/>
</dbReference>
<dbReference type="GO" id="GO:0006884">
    <property type="term" value="P:cell volume homeostasis"/>
    <property type="evidence" value="ECO:0000318"/>
    <property type="project" value="GO_Central"/>
</dbReference>
<dbReference type="GO" id="GO:0055064">
    <property type="term" value="P:chloride ion homeostasis"/>
    <property type="evidence" value="ECO:0000318"/>
    <property type="project" value="GO_Central"/>
</dbReference>
<dbReference type="GO" id="GO:1902476">
    <property type="term" value="P:chloride transmembrane transport"/>
    <property type="evidence" value="ECO:0000318"/>
    <property type="project" value="GO_Central"/>
</dbReference>
<dbReference type="GO" id="GO:0055075">
    <property type="term" value="P:potassium ion homeostasis"/>
    <property type="evidence" value="ECO:0000318"/>
    <property type="project" value="GO_Central"/>
</dbReference>
<dbReference type="FunFam" id="1.20.1740.10:FF:000013">
    <property type="entry name" value="Solute carrier family 12 member"/>
    <property type="match status" value="1"/>
</dbReference>
<dbReference type="Gene3D" id="1.20.1740.10">
    <property type="entry name" value="Amino acid/polyamine transporter I"/>
    <property type="match status" value="1"/>
</dbReference>
<dbReference type="InterPro" id="IPR004841">
    <property type="entry name" value="AA-permease/SLC12A_dom"/>
</dbReference>
<dbReference type="InterPro" id="IPR018491">
    <property type="entry name" value="SLC12_C"/>
</dbReference>
<dbReference type="InterPro" id="IPR004842">
    <property type="entry name" value="SLC12A_fam"/>
</dbReference>
<dbReference type="PANTHER" id="PTHR11827:SF98">
    <property type="entry name" value="SOLUTE CARRIER FAMILY 12 MEMBER 9"/>
    <property type="match status" value="1"/>
</dbReference>
<dbReference type="PANTHER" id="PTHR11827">
    <property type="entry name" value="SOLUTE CARRIER FAMILY 12, CATION COTRANSPORTERS"/>
    <property type="match status" value="1"/>
</dbReference>
<dbReference type="Pfam" id="PF00324">
    <property type="entry name" value="AA_permease"/>
    <property type="match status" value="1"/>
</dbReference>
<dbReference type="Pfam" id="PF03522">
    <property type="entry name" value="SLC12"/>
    <property type="match status" value="1"/>
</dbReference>
<proteinExistence type="evidence at transcript level"/>
<accession>Q0VGW6</accession>
<name>S12A9_XENLA</name>
<evidence type="ECO:0000250" key="1">
    <source>
        <dbReference type="UniProtKB" id="Q9BXP2"/>
    </source>
</evidence>
<evidence type="ECO:0000255" key="2"/>
<evidence type="ECO:0000269" key="3">
    <source>
    </source>
</evidence>
<evidence type="ECO:0000305" key="4"/>
<protein>
    <recommendedName>
        <fullName>Solute carrier family 12 member 9</fullName>
    </recommendedName>
    <alternativeName>
        <fullName>Cation-chloride cotransporter-interacting protein 1</fullName>
    </alternativeName>
</protein>
<comment type="function">
    <text evidence="1 3">Seems to correspond to a subunit of a multimeric transport system and thus, additional subunits may be required for its function. May play a role in lysosomal ion flux and osmoregulation (By similarity).</text>
</comment>
<comment type="subcellular location">
    <subcellularLocation>
        <location evidence="3">Cell membrane</location>
        <topology evidence="3">Multi-pass membrane protein</topology>
    </subcellularLocation>
    <subcellularLocation>
        <location evidence="1">Lysosome membrane</location>
    </subcellularLocation>
</comment>
<comment type="similarity">
    <text evidence="4">Belongs to the SLC12A transporter family.</text>
</comment>
<gene>
    <name type="primary">slc12a9</name>
    <name type="synonym">cip1</name>
</gene>
<organism>
    <name type="scientific">Xenopus laevis</name>
    <name type="common">African clawed frog</name>
    <dbReference type="NCBI Taxonomy" id="8355"/>
    <lineage>
        <taxon>Eukaryota</taxon>
        <taxon>Metazoa</taxon>
        <taxon>Chordata</taxon>
        <taxon>Craniata</taxon>
        <taxon>Vertebrata</taxon>
        <taxon>Euteleostomi</taxon>
        <taxon>Amphibia</taxon>
        <taxon>Batrachia</taxon>
        <taxon>Anura</taxon>
        <taxon>Pipoidea</taxon>
        <taxon>Pipidae</taxon>
        <taxon>Xenopodinae</taxon>
        <taxon>Xenopus</taxon>
        <taxon>Xenopus</taxon>
    </lineage>
</organism>